<proteinExistence type="inferred from homology"/>
<comment type="function">
    <text evidence="1">Specifically methylates the guanine in position 2445 (m2G2445) and the guanine in position 2069 (m7G2069) of 23S rRNA.</text>
</comment>
<comment type="catalytic activity">
    <reaction evidence="1">
        <text>guanosine(2445) in 23S rRNA + S-adenosyl-L-methionine = N(2)-methylguanosine(2445) in 23S rRNA + S-adenosyl-L-homocysteine + H(+)</text>
        <dbReference type="Rhea" id="RHEA:42740"/>
        <dbReference type="Rhea" id="RHEA-COMP:10215"/>
        <dbReference type="Rhea" id="RHEA-COMP:10216"/>
        <dbReference type="ChEBI" id="CHEBI:15378"/>
        <dbReference type="ChEBI" id="CHEBI:57856"/>
        <dbReference type="ChEBI" id="CHEBI:59789"/>
        <dbReference type="ChEBI" id="CHEBI:74269"/>
        <dbReference type="ChEBI" id="CHEBI:74481"/>
        <dbReference type="EC" id="2.1.1.173"/>
    </reaction>
</comment>
<comment type="catalytic activity">
    <reaction evidence="1">
        <text>guanosine(2069) in 23S rRNA + S-adenosyl-L-methionine = N(2)-methylguanosine(2069) in 23S rRNA + S-adenosyl-L-homocysteine + H(+)</text>
        <dbReference type="Rhea" id="RHEA:43772"/>
        <dbReference type="Rhea" id="RHEA-COMP:10688"/>
        <dbReference type="Rhea" id="RHEA-COMP:10689"/>
        <dbReference type="ChEBI" id="CHEBI:15378"/>
        <dbReference type="ChEBI" id="CHEBI:57856"/>
        <dbReference type="ChEBI" id="CHEBI:59789"/>
        <dbReference type="ChEBI" id="CHEBI:74269"/>
        <dbReference type="ChEBI" id="CHEBI:74481"/>
        <dbReference type="EC" id="2.1.1.264"/>
    </reaction>
</comment>
<comment type="subcellular location">
    <subcellularLocation>
        <location evidence="1">Cytoplasm</location>
    </subcellularLocation>
</comment>
<comment type="similarity">
    <text evidence="1">Belongs to the methyltransferase superfamily. RlmKL family.</text>
</comment>
<organism>
    <name type="scientific">Pseudomonas paraeruginosa (strain DSM 24068 / PA7)</name>
    <name type="common">Pseudomonas aeruginosa (strain PA7)</name>
    <dbReference type="NCBI Taxonomy" id="381754"/>
    <lineage>
        <taxon>Bacteria</taxon>
        <taxon>Pseudomonadati</taxon>
        <taxon>Pseudomonadota</taxon>
        <taxon>Gammaproteobacteria</taxon>
        <taxon>Pseudomonadales</taxon>
        <taxon>Pseudomonadaceae</taxon>
        <taxon>Pseudomonas</taxon>
        <taxon>Pseudomonas paraeruginosa</taxon>
    </lineage>
</organism>
<sequence length="725" mass="81095">MADVYELFLTCPKGLESLLLEEAQGLGLSEARAQVSAVRGQGSLEVAYRLCLWSRLANRVLLVLARFPVENAESMYLAVHAVNWEDHLDAGGTLAVEFSGKGSGIDNTHFGALKVKDAIVDNLRERSGRRPSVDKVNPDVRVHLHLDRGQATLSLDLSGHSLHQRGYRLQQGAAPLKENLAAAVLIRAGWPKIAAEGGALADPMCGVGTFLVEAALMAADIAPNLRRERWGFSNWLGHVPALWRKLHEEAQQRAAAGLARAPLWIRGYEADPRLIQPARNNIERAGVADWVKIYQGELATFEPRPDKGQAGLVICNPPYGERLGDEASLLYLYQNLGERLRQSCIGWSAGVFTGAPELGKRMGIRSHKQYAFWNGALACKLLMIQVEPRQFVTGERGERNDDGQARAPSEPARLSEGGQMFANRLQKNLRQLGKWARRDKVECYRLYDADMPEYALAVDIYGDWVHVQEYAAPKSVDPAKAQARLFDALAAIPQALGVAQERVVVKRRERQAGKKQYERQSSEGKFLEVGEGGVRLLVNLTDYLDTGLFLDHRPMRLRIQKEAAGKRFLNLFCYTATATVHAARGGARSTTSVDLSKTYLDWARRNLSLNGFSDRQRLVHSDVMEWLREDDGQYELIFIDPPTFSNSKRMEGVFDVQRDQVELLDLAMARLAPGGVLYFSNNFRKFELDESVQARYAVEEITGETLDPDFARNPKIHRAWRITVR</sequence>
<feature type="chain" id="PRO_0000366786" description="Ribosomal RNA large subunit methyltransferase K/L">
    <location>
        <begin position="1"/>
        <end position="725"/>
    </location>
</feature>
<feature type="domain" description="THUMP" evidence="1">
    <location>
        <begin position="46"/>
        <end position="157"/>
    </location>
</feature>
<feature type="region of interest" description="Disordered" evidence="2">
    <location>
        <begin position="393"/>
        <end position="412"/>
    </location>
</feature>
<feature type="compositionally biased region" description="Basic and acidic residues" evidence="2">
    <location>
        <begin position="395"/>
        <end position="404"/>
    </location>
</feature>
<evidence type="ECO:0000255" key="1">
    <source>
        <dbReference type="HAMAP-Rule" id="MF_01858"/>
    </source>
</evidence>
<evidence type="ECO:0000256" key="2">
    <source>
        <dbReference type="SAM" id="MobiDB-lite"/>
    </source>
</evidence>
<keyword id="KW-0963">Cytoplasm</keyword>
<keyword id="KW-0489">Methyltransferase</keyword>
<keyword id="KW-0694">RNA-binding</keyword>
<keyword id="KW-0698">rRNA processing</keyword>
<keyword id="KW-0949">S-adenosyl-L-methionine</keyword>
<keyword id="KW-0808">Transferase</keyword>
<accession>A6V328</accession>
<protein>
    <recommendedName>
        <fullName evidence="1">Ribosomal RNA large subunit methyltransferase K/L</fullName>
    </recommendedName>
    <domain>
        <recommendedName>
            <fullName evidence="1">23S rRNA m2G2445 methyltransferase</fullName>
            <ecNumber evidence="1">2.1.1.173</ecNumber>
        </recommendedName>
        <alternativeName>
            <fullName evidence="1">rRNA (guanine-N(2)-)-methyltransferase RlmL</fullName>
        </alternativeName>
    </domain>
    <domain>
        <recommendedName>
            <fullName evidence="1">23S rRNA m7G2069 methyltransferase</fullName>
            <ecNumber evidence="1">2.1.1.264</ecNumber>
        </recommendedName>
        <alternativeName>
            <fullName evidence="1">rRNA (guanine-N(7)-)-methyltransferase RlmK</fullName>
        </alternativeName>
    </domain>
</protein>
<name>RLMKL_PSEP7</name>
<gene>
    <name evidence="1" type="primary">rlmL</name>
    <name type="ordered locus">PSPA7_2090</name>
</gene>
<dbReference type="EC" id="2.1.1.173" evidence="1"/>
<dbReference type="EC" id="2.1.1.264" evidence="1"/>
<dbReference type="EMBL" id="CP000744">
    <property type="protein sequence ID" value="ABR81760.1"/>
    <property type="molecule type" value="Genomic_DNA"/>
</dbReference>
<dbReference type="RefSeq" id="WP_012075110.1">
    <property type="nucleotide sequence ID" value="NC_009656.1"/>
</dbReference>
<dbReference type="SMR" id="A6V328"/>
<dbReference type="KEGG" id="pap:PSPA7_2090"/>
<dbReference type="HOGENOM" id="CLU_014042_2_0_6"/>
<dbReference type="Proteomes" id="UP000001582">
    <property type="component" value="Chromosome"/>
</dbReference>
<dbReference type="GO" id="GO:0005737">
    <property type="term" value="C:cytoplasm"/>
    <property type="evidence" value="ECO:0007669"/>
    <property type="project" value="UniProtKB-SubCell"/>
</dbReference>
<dbReference type="GO" id="GO:0052915">
    <property type="term" value="F:23S rRNA (guanine(2445)-N(2))-methyltransferase activity"/>
    <property type="evidence" value="ECO:0007669"/>
    <property type="project" value="UniProtKB-UniRule"/>
</dbReference>
<dbReference type="GO" id="GO:0003723">
    <property type="term" value="F:RNA binding"/>
    <property type="evidence" value="ECO:0007669"/>
    <property type="project" value="UniProtKB-KW"/>
</dbReference>
<dbReference type="GO" id="GO:0070043">
    <property type="term" value="F:rRNA (guanine-N7-)-methyltransferase activity"/>
    <property type="evidence" value="ECO:0007669"/>
    <property type="project" value="UniProtKB-UniRule"/>
</dbReference>
<dbReference type="CDD" id="cd02440">
    <property type="entry name" value="AdoMet_MTases"/>
    <property type="match status" value="1"/>
</dbReference>
<dbReference type="CDD" id="cd11715">
    <property type="entry name" value="THUMP_AdoMetMT"/>
    <property type="match status" value="1"/>
</dbReference>
<dbReference type="Gene3D" id="3.30.2130.30">
    <property type="match status" value="1"/>
</dbReference>
<dbReference type="Gene3D" id="3.30.750.80">
    <property type="entry name" value="RNA methyltransferase domain (HRMD) like"/>
    <property type="match status" value="1"/>
</dbReference>
<dbReference type="Gene3D" id="3.40.50.150">
    <property type="entry name" value="Vaccinia Virus protein VP39"/>
    <property type="match status" value="2"/>
</dbReference>
<dbReference type="HAMAP" id="MF_01858">
    <property type="entry name" value="23SrRNA_methyltr_KL"/>
    <property type="match status" value="1"/>
</dbReference>
<dbReference type="InterPro" id="IPR017244">
    <property type="entry name" value="23SrRNA_methyltr_KL"/>
</dbReference>
<dbReference type="InterPro" id="IPR002052">
    <property type="entry name" value="DNA_methylase_N6_adenine_CS"/>
</dbReference>
<dbReference type="InterPro" id="IPR000241">
    <property type="entry name" value="RlmKL-like_Mtase"/>
</dbReference>
<dbReference type="InterPro" id="IPR054170">
    <property type="entry name" value="RlmL_1st"/>
</dbReference>
<dbReference type="InterPro" id="IPR019614">
    <property type="entry name" value="SAM-dep_methyl-trfase"/>
</dbReference>
<dbReference type="InterPro" id="IPR029063">
    <property type="entry name" value="SAM-dependent_MTases_sf"/>
</dbReference>
<dbReference type="InterPro" id="IPR004114">
    <property type="entry name" value="THUMP_dom"/>
</dbReference>
<dbReference type="NCBIfam" id="NF008748">
    <property type="entry name" value="PRK11783.1"/>
    <property type="match status" value="1"/>
</dbReference>
<dbReference type="PANTHER" id="PTHR47313">
    <property type="entry name" value="RIBOSOMAL RNA LARGE SUBUNIT METHYLTRANSFERASE K/L"/>
    <property type="match status" value="1"/>
</dbReference>
<dbReference type="PANTHER" id="PTHR47313:SF1">
    <property type="entry name" value="RIBOSOMAL RNA LARGE SUBUNIT METHYLTRANSFERASE K_L"/>
    <property type="match status" value="1"/>
</dbReference>
<dbReference type="Pfam" id="PF10672">
    <property type="entry name" value="Methyltrans_SAM"/>
    <property type="match status" value="1"/>
</dbReference>
<dbReference type="Pfam" id="PF22020">
    <property type="entry name" value="RlmL_1st"/>
    <property type="match status" value="1"/>
</dbReference>
<dbReference type="Pfam" id="PF02926">
    <property type="entry name" value="THUMP"/>
    <property type="match status" value="1"/>
</dbReference>
<dbReference type="Pfam" id="PF01170">
    <property type="entry name" value="UPF0020"/>
    <property type="match status" value="1"/>
</dbReference>
<dbReference type="PIRSF" id="PIRSF037618">
    <property type="entry name" value="RNA_Mtase_bacteria_prd"/>
    <property type="match status" value="1"/>
</dbReference>
<dbReference type="SMART" id="SM00981">
    <property type="entry name" value="THUMP"/>
    <property type="match status" value="1"/>
</dbReference>
<dbReference type="SUPFAM" id="SSF53335">
    <property type="entry name" value="S-adenosyl-L-methionine-dependent methyltransferases"/>
    <property type="match status" value="2"/>
</dbReference>
<dbReference type="PROSITE" id="PS51165">
    <property type="entry name" value="THUMP"/>
    <property type="match status" value="1"/>
</dbReference>
<reference key="1">
    <citation type="submission" date="2007-06" db="EMBL/GenBank/DDBJ databases">
        <authorList>
            <person name="Dodson R.J."/>
            <person name="Harkins D."/>
            <person name="Paulsen I.T."/>
        </authorList>
    </citation>
    <scope>NUCLEOTIDE SEQUENCE [LARGE SCALE GENOMIC DNA]</scope>
    <source>
        <strain>DSM 24068 / PA7</strain>
    </source>
</reference>